<dbReference type="EMBL" id="AC025279">
    <property type="status" value="NOT_ANNOTATED_CDS"/>
    <property type="molecule type" value="Genomic_DNA"/>
</dbReference>
<dbReference type="EMBL" id="BC041583">
    <property type="protein sequence ID" value="AAH41583.1"/>
    <property type="molecule type" value="mRNA"/>
</dbReference>
<dbReference type="GlyGen" id="Q8IUI4">
    <property type="glycosylation" value="1 site"/>
</dbReference>
<dbReference type="iPTMnet" id="Q8IUI4"/>
<dbReference type="PhosphoSitePlus" id="Q8IUI4"/>
<dbReference type="BioMuta" id="HGNC:31914"/>
<dbReference type="DMDM" id="322510069"/>
<dbReference type="jPOST" id="Q8IUI4"/>
<dbReference type="MassIVE" id="Q8IUI4"/>
<dbReference type="ProteomicsDB" id="70576"/>
<dbReference type="AGR" id="HGNC:31914"/>
<dbReference type="GeneCards" id="SNX29P2"/>
<dbReference type="HGNC" id="HGNC:31914">
    <property type="gene designation" value="SNX29P2"/>
</dbReference>
<dbReference type="neXtProt" id="NX_Q8IUI4"/>
<dbReference type="InParanoid" id="Q8IUI4"/>
<dbReference type="PAN-GO" id="Q8IUI4">
    <property type="GO annotations" value="0 GO annotations based on evolutionary models"/>
</dbReference>
<dbReference type="PhylomeDB" id="Q8IUI4"/>
<dbReference type="PathwayCommons" id="Q8IUI4"/>
<dbReference type="SignaLink" id="Q8IUI4"/>
<dbReference type="ChiTaRS" id="SNX29P2">
    <property type="organism name" value="human"/>
</dbReference>
<dbReference type="Pharos" id="Q8IUI4">
    <property type="development level" value="Tdark"/>
</dbReference>
<dbReference type="Proteomes" id="UP000005640">
    <property type="component" value="Unplaced"/>
</dbReference>
<dbReference type="RNAct" id="Q8IUI4">
    <property type="molecule type" value="protein"/>
</dbReference>
<dbReference type="PANTHER" id="PTHR47194:SF4">
    <property type="entry name" value="SORTING NEXIN-29"/>
    <property type="match status" value="1"/>
</dbReference>
<dbReference type="PANTHER" id="PTHR47194">
    <property type="entry name" value="SORTING NEXIN-29-RELATED"/>
    <property type="match status" value="1"/>
</dbReference>
<gene>
    <name type="primary">SNX29P2</name>
    <name type="synonym">RUNDC2C</name>
</gene>
<feature type="chain" id="PRO_0000270936" description="Putative protein SNX29P2">
    <location>
        <begin position="1"/>
        <end position="249"/>
    </location>
</feature>
<feature type="region of interest" description="Disordered" evidence="1">
    <location>
        <begin position="109"/>
        <end position="171"/>
    </location>
</feature>
<feature type="region of interest" description="Disordered" evidence="1">
    <location>
        <begin position="188"/>
        <end position="249"/>
    </location>
</feature>
<feature type="compositionally biased region" description="Low complexity" evidence="1">
    <location>
        <begin position="156"/>
        <end position="170"/>
    </location>
</feature>
<feature type="compositionally biased region" description="Acidic residues" evidence="1">
    <location>
        <begin position="193"/>
        <end position="204"/>
    </location>
</feature>
<feature type="compositionally biased region" description="Polar residues" evidence="1">
    <location>
        <begin position="226"/>
        <end position="242"/>
    </location>
</feature>
<feature type="sequence conflict" description="In Ref. 2; AAH41583." evidence="2" ref="2">
    <original>S</original>
    <variation>G</variation>
    <location>
        <position position="239"/>
    </location>
</feature>
<feature type="sequence conflict" description="In Ref. 2; AAH41583." evidence="2" ref="2">
    <original>K</original>
    <variation>R</variation>
    <location>
        <position position="249"/>
    </location>
</feature>
<proteinExistence type="uncertain"/>
<keyword id="KW-1267">Proteomics identification</keyword>
<keyword id="KW-1185">Reference proteome</keyword>
<evidence type="ECO:0000256" key="1">
    <source>
        <dbReference type="SAM" id="MobiDB-lite"/>
    </source>
</evidence>
<evidence type="ECO:0000305" key="2"/>
<protein>
    <recommendedName>
        <fullName>Putative protein SNX29P2</fullName>
    </recommendedName>
    <alternativeName>
        <fullName>RUN domain-containing protein 2C</fullName>
    </alternativeName>
    <alternativeName>
        <fullName>Sorting nexin 29 protein pseudogene 2</fullName>
    </alternativeName>
</protein>
<name>S29P2_HUMAN</name>
<organism>
    <name type="scientific">Homo sapiens</name>
    <name type="common">Human</name>
    <dbReference type="NCBI Taxonomy" id="9606"/>
    <lineage>
        <taxon>Eukaryota</taxon>
        <taxon>Metazoa</taxon>
        <taxon>Chordata</taxon>
        <taxon>Craniata</taxon>
        <taxon>Vertebrata</taxon>
        <taxon>Euteleostomi</taxon>
        <taxon>Mammalia</taxon>
        <taxon>Eutheria</taxon>
        <taxon>Euarchontoglires</taxon>
        <taxon>Primates</taxon>
        <taxon>Haplorrhini</taxon>
        <taxon>Catarrhini</taxon>
        <taxon>Hominidae</taxon>
        <taxon>Homo</taxon>
    </lineage>
</organism>
<reference key="1">
    <citation type="journal article" date="2004" name="Nature">
        <title>The sequence and analysis of duplication-rich human chromosome 16.</title>
        <authorList>
            <person name="Martin J."/>
            <person name="Han C."/>
            <person name="Gordon L.A."/>
            <person name="Terry A."/>
            <person name="Prabhakar S."/>
            <person name="She X."/>
            <person name="Xie G."/>
            <person name="Hellsten U."/>
            <person name="Chan Y.M."/>
            <person name="Altherr M."/>
            <person name="Couronne O."/>
            <person name="Aerts A."/>
            <person name="Bajorek E."/>
            <person name="Black S."/>
            <person name="Blumer H."/>
            <person name="Branscomb E."/>
            <person name="Brown N.C."/>
            <person name="Bruno W.J."/>
            <person name="Buckingham J.M."/>
            <person name="Callen D.F."/>
            <person name="Campbell C.S."/>
            <person name="Campbell M.L."/>
            <person name="Campbell E.W."/>
            <person name="Caoile C."/>
            <person name="Challacombe J.F."/>
            <person name="Chasteen L.A."/>
            <person name="Chertkov O."/>
            <person name="Chi H.C."/>
            <person name="Christensen M."/>
            <person name="Clark L.M."/>
            <person name="Cohn J.D."/>
            <person name="Denys M."/>
            <person name="Detter J.C."/>
            <person name="Dickson M."/>
            <person name="Dimitrijevic-Bussod M."/>
            <person name="Escobar J."/>
            <person name="Fawcett J.J."/>
            <person name="Flowers D."/>
            <person name="Fotopulos D."/>
            <person name="Glavina T."/>
            <person name="Gomez M."/>
            <person name="Gonzales E."/>
            <person name="Goodstein D."/>
            <person name="Goodwin L.A."/>
            <person name="Grady D.L."/>
            <person name="Grigoriev I."/>
            <person name="Groza M."/>
            <person name="Hammon N."/>
            <person name="Hawkins T."/>
            <person name="Haydu L."/>
            <person name="Hildebrand C.E."/>
            <person name="Huang W."/>
            <person name="Israni S."/>
            <person name="Jett J."/>
            <person name="Jewett P.B."/>
            <person name="Kadner K."/>
            <person name="Kimball H."/>
            <person name="Kobayashi A."/>
            <person name="Krawczyk M.-C."/>
            <person name="Leyba T."/>
            <person name="Longmire J.L."/>
            <person name="Lopez F."/>
            <person name="Lou Y."/>
            <person name="Lowry S."/>
            <person name="Ludeman T."/>
            <person name="Manohar C.F."/>
            <person name="Mark G.A."/>
            <person name="McMurray K.L."/>
            <person name="Meincke L.J."/>
            <person name="Morgan J."/>
            <person name="Moyzis R.K."/>
            <person name="Mundt M.O."/>
            <person name="Munk A.C."/>
            <person name="Nandkeshwar R.D."/>
            <person name="Pitluck S."/>
            <person name="Pollard M."/>
            <person name="Predki P."/>
            <person name="Parson-Quintana B."/>
            <person name="Ramirez L."/>
            <person name="Rash S."/>
            <person name="Retterer J."/>
            <person name="Ricke D.O."/>
            <person name="Robinson D.L."/>
            <person name="Rodriguez A."/>
            <person name="Salamov A."/>
            <person name="Saunders E.H."/>
            <person name="Scott D."/>
            <person name="Shough T."/>
            <person name="Stallings R.L."/>
            <person name="Stalvey M."/>
            <person name="Sutherland R.D."/>
            <person name="Tapia R."/>
            <person name="Tesmer J.G."/>
            <person name="Thayer N."/>
            <person name="Thompson L.S."/>
            <person name="Tice H."/>
            <person name="Torney D.C."/>
            <person name="Tran-Gyamfi M."/>
            <person name="Tsai M."/>
            <person name="Ulanovsky L.E."/>
            <person name="Ustaszewska A."/>
            <person name="Vo N."/>
            <person name="White P.S."/>
            <person name="Williams A.L."/>
            <person name="Wills P.L."/>
            <person name="Wu J.-R."/>
            <person name="Wu K."/>
            <person name="Yang J."/>
            <person name="DeJong P."/>
            <person name="Bruce D."/>
            <person name="Doggett N.A."/>
            <person name="Deaven L."/>
            <person name="Schmutz J."/>
            <person name="Grimwood J."/>
            <person name="Richardson P."/>
            <person name="Rokhsar D.S."/>
            <person name="Eichler E.E."/>
            <person name="Gilna P."/>
            <person name="Lucas S.M."/>
            <person name="Myers R.M."/>
            <person name="Rubin E.M."/>
            <person name="Pennacchio L.A."/>
        </authorList>
    </citation>
    <scope>NUCLEOTIDE SEQUENCE [LARGE SCALE GENOMIC DNA]</scope>
</reference>
<reference key="2">
    <citation type="journal article" date="2004" name="Genome Res.">
        <title>The status, quality, and expansion of the NIH full-length cDNA project: the Mammalian Gene Collection (MGC).</title>
        <authorList>
            <consortium name="The MGC Project Team"/>
        </authorList>
    </citation>
    <scope>NUCLEOTIDE SEQUENCE [LARGE SCALE MRNA]</scope>
    <source>
        <tissue>B-cell</tissue>
    </source>
</reference>
<sequence>MDEERSSMLPTMAAGPNSILFAINIDNKDLNGQSKFAPTVSDLLKESTQNVTLLKESTQGVSSVFREITASSAISILIKPEQETDPLPVVSRNVSADAKCKKERKKKKQVTNIISFDDEEDEQNSGDMFKKTPGAGESSEDNSDHSSVNIMSAFESPFGPNSNGSQSSNSWKIDSLSLNREFGYQKLDVKSIDDEDVDENEDDVYGNSSGRKHRGHSESPEKNGAHSVTQAGVQWHDLSSLQPLPPGFK</sequence>
<comment type="similarity">
    <text evidence="2">Belongs to the sorting nexin family.</text>
</comment>
<comment type="caution">
    <text evidence="2">Could be the product of a pseudogene. Related to SNX29.</text>
</comment>
<accession>Q8IUI4</accession>